<evidence type="ECO:0000255" key="1">
    <source>
        <dbReference type="HAMAP-Rule" id="MF_01186"/>
    </source>
</evidence>
<evidence type="ECO:0000256" key="2">
    <source>
        <dbReference type="SAM" id="MobiDB-lite"/>
    </source>
</evidence>
<proteinExistence type="inferred from homology"/>
<organism>
    <name type="scientific">Escherichia coli O6:K15:H31 (strain 536 / UPEC)</name>
    <dbReference type="NCBI Taxonomy" id="362663"/>
    <lineage>
        <taxon>Bacteria</taxon>
        <taxon>Pseudomonadati</taxon>
        <taxon>Pseudomonadota</taxon>
        <taxon>Gammaproteobacteria</taxon>
        <taxon>Enterobacterales</taxon>
        <taxon>Enterobacteriaceae</taxon>
        <taxon>Escherichia</taxon>
    </lineage>
</organism>
<gene>
    <name evidence="1" type="primary">lptE</name>
    <name type="synonym">rlpB</name>
    <name type="ordered locus">ECP_0671</name>
</gene>
<reference key="1">
    <citation type="journal article" date="2006" name="Mol. Microbiol.">
        <title>Role of pathogenicity island-associated integrases in the genome plasticity of uropathogenic Escherichia coli strain 536.</title>
        <authorList>
            <person name="Hochhut B."/>
            <person name="Wilde C."/>
            <person name="Balling G."/>
            <person name="Middendorf B."/>
            <person name="Dobrindt U."/>
            <person name="Brzuszkiewicz E."/>
            <person name="Gottschalk G."/>
            <person name="Carniel E."/>
            <person name="Hacker J."/>
        </authorList>
    </citation>
    <scope>NUCLEOTIDE SEQUENCE [LARGE SCALE GENOMIC DNA]</scope>
    <source>
        <strain>536 / UPEC</strain>
    </source>
</reference>
<accession>Q0TK32</accession>
<protein>
    <recommendedName>
        <fullName evidence="1">LPS-assembly lipoprotein LptE</fullName>
    </recommendedName>
</protein>
<dbReference type="EMBL" id="CP000247">
    <property type="protein sequence ID" value="ABG68699.1"/>
    <property type="molecule type" value="Genomic_DNA"/>
</dbReference>
<dbReference type="RefSeq" id="WP_001269673.1">
    <property type="nucleotide sequence ID" value="NC_008253.1"/>
</dbReference>
<dbReference type="SMR" id="Q0TK32"/>
<dbReference type="GeneID" id="93776841"/>
<dbReference type="KEGG" id="ecp:ECP_0671"/>
<dbReference type="HOGENOM" id="CLU_103309_1_1_6"/>
<dbReference type="Proteomes" id="UP000009182">
    <property type="component" value="Chromosome"/>
</dbReference>
<dbReference type="GO" id="GO:0009279">
    <property type="term" value="C:cell outer membrane"/>
    <property type="evidence" value="ECO:0007669"/>
    <property type="project" value="UniProtKB-SubCell"/>
</dbReference>
<dbReference type="GO" id="GO:1990351">
    <property type="term" value="C:transporter complex"/>
    <property type="evidence" value="ECO:0007669"/>
    <property type="project" value="TreeGrafter"/>
</dbReference>
<dbReference type="GO" id="GO:0001530">
    <property type="term" value="F:lipopolysaccharide binding"/>
    <property type="evidence" value="ECO:0007669"/>
    <property type="project" value="TreeGrafter"/>
</dbReference>
<dbReference type="GO" id="GO:0043165">
    <property type="term" value="P:Gram-negative-bacterium-type cell outer membrane assembly"/>
    <property type="evidence" value="ECO:0007669"/>
    <property type="project" value="UniProtKB-UniRule"/>
</dbReference>
<dbReference type="GO" id="GO:0015920">
    <property type="term" value="P:lipopolysaccharide transport"/>
    <property type="evidence" value="ECO:0007669"/>
    <property type="project" value="TreeGrafter"/>
</dbReference>
<dbReference type="FunFam" id="3.30.160.150:FF:000001">
    <property type="entry name" value="LPS-assembly lipoprotein LptE"/>
    <property type="match status" value="1"/>
</dbReference>
<dbReference type="Gene3D" id="3.30.160.150">
    <property type="entry name" value="Lipoprotein like domain"/>
    <property type="match status" value="1"/>
</dbReference>
<dbReference type="HAMAP" id="MF_01186">
    <property type="entry name" value="LPS_assembly_LptE"/>
    <property type="match status" value="1"/>
</dbReference>
<dbReference type="InterPro" id="IPR007485">
    <property type="entry name" value="LPS_assembly_LptE"/>
</dbReference>
<dbReference type="NCBIfam" id="NF008062">
    <property type="entry name" value="PRK10796.1"/>
    <property type="match status" value="1"/>
</dbReference>
<dbReference type="PANTHER" id="PTHR38098">
    <property type="entry name" value="LPS-ASSEMBLY LIPOPROTEIN LPTE"/>
    <property type="match status" value="1"/>
</dbReference>
<dbReference type="PANTHER" id="PTHR38098:SF1">
    <property type="entry name" value="LPS-ASSEMBLY LIPOPROTEIN LPTE"/>
    <property type="match status" value="1"/>
</dbReference>
<dbReference type="Pfam" id="PF04390">
    <property type="entry name" value="LptE"/>
    <property type="match status" value="1"/>
</dbReference>
<dbReference type="PROSITE" id="PS51257">
    <property type="entry name" value="PROKAR_LIPOPROTEIN"/>
    <property type="match status" value="1"/>
</dbReference>
<comment type="function">
    <text evidence="1">Together with LptD, is involved in the assembly of lipopolysaccharide (LPS) at the surface of the outer membrane. Required for the proper assembly of LptD. Binds LPS and may serve as the LPS recognition site at the outer membrane.</text>
</comment>
<comment type="subunit">
    <text evidence="1">Component of the lipopolysaccharide transport and assembly complex. Interacts with LptD.</text>
</comment>
<comment type="subcellular location">
    <subcellularLocation>
        <location evidence="1">Cell outer membrane</location>
        <topology evidence="1">Lipid-anchor</topology>
    </subcellularLocation>
</comment>
<comment type="similarity">
    <text evidence="1">Belongs to the LptE lipoprotein family.</text>
</comment>
<name>LPTE_ECOL5</name>
<sequence>MRYLATLLLSLAVLITAGCGWHLRDTTQVPSTMKVMILDSGDPNGPLSRAVRNQLRLNGVELLDKETTRKDVPSLRLGKVSIAKDTASVFRNGQTAEYQMIMTVNATVLIPGRDIYPISAKVFRSFFDNPQMALAKDNEQDMIVKEMYDRAAEQLIRKLPSIRAADIRSDEEQTSTTTDTPATPARVSTTLGN</sequence>
<feature type="signal peptide" evidence="1">
    <location>
        <begin position="1"/>
        <end position="18"/>
    </location>
</feature>
<feature type="chain" id="PRO_0000281179" description="LPS-assembly lipoprotein LptE">
    <location>
        <begin position="19"/>
        <end position="193"/>
    </location>
</feature>
<feature type="region of interest" description="Disordered" evidence="2">
    <location>
        <begin position="166"/>
        <end position="193"/>
    </location>
</feature>
<feature type="compositionally biased region" description="Low complexity" evidence="2">
    <location>
        <begin position="174"/>
        <end position="186"/>
    </location>
</feature>
<feature type="lipid moiety-binding region" description="N-palmitoyl cysteine" evidence="1">
    <location>
        <position position="19"/>
    </location>
</feature>
<feature type="lipid moiety-binding region" description="S-diacylglycerol cysteine" evidence="1">
    <location>
        <position position="19"/>
    </location>
</feature>
<keyword id="KW-0998">Cell outer membrane</keyword>
<keyword id="KW-0449">Lipoprotein</keyword>
<keyword id="KW-0472">Membrane</keyword>
<keyword id="KW-0564">Palmitate</keyword>
<keyword id="KW-0732">Signal</keyword>